<sequence length="335" mass="35938">MTLPLLGPMSLSGFEHPWFFLFFFVVIGLVALYIVVQLARQKRMLRFANMELLESVAPKQPSRMRHLPAVLMILSLVSFTIAMAGPTHDVRIPRNRAVVMLVIDVSQSMRATDVAPNRLTAAQEAAKQFADQLTPGINLGLIAYAGTATVLVSPTTNRESTKTAIDKLQLADRTATGEGIFTALQAIATVGAVIGGGDEPPPARVVLMSDGKETVPSNPDNPKGAYTAARTAKDQGVPISTVSFGTPYGYVEINEQRQPVPVDDEMLKKIADLSGGEAFTASSLEQLKQVFTNLQEQIGYETIKGDASVGWLRLGAGVLALAALGALLINRRLPN</sequence>
<comment type="subcellular location">
    <subcellularLocation>
        <location evidence="1">Cell membrane</location>
        <topology evidence="1">Multi-pass membrane protein</topology>
    </subcellularLocation>
</comment>
<comment type="similarity">
    <text evidence="1">Belongs to the UPF0353 family.</text>
</comment>
<accession>A4T9I4</accession>
<keyword id="KW-1003">Cell membrane</keyword>
<keyword id="KW-0472">Membrane</keyword>
<keyword id="KW-0812">Transmembrane</keyword>
<keyword id="KW-1133">Transmembrane helix</keyword>
<feature type="chain" id="PRO_1000086696" description="UPF0353 protein Mflv_3659">
    <location>
        <begin position="1"/>
        <end position="335"/>
    </location>
</feature>
<feature type="transmembrane region" description="Helical" evidence="1">
    <location>
        <begin position="18"/>
        <end position="38"/>
    </location>
</feature>
<feature type="transmembrane region" description="Helical" evidence="1">
    <location>
        <begin position="67"/>
        <end position="87"/>
    </location>
</feature>
<feature type="transmembrane region" description="Helical" evidence="1">
    <location>
        <begin position="309"/>
        <end position="329"/>
    </location>
</feature>
<feature type="domain" description="VWFA" evidence="1">
    <location>
        <begin position="98"/>
        <end position="294"/>
    </location>
</feature>
<organism>
    <name type="scientific">Mycolicibacterium gilvum (strain PYR-GCK)</name>
    <name type="common">Mycobacterium gilvum (strain PYR-GCK)</name>
    <dbReference type="NCBI Taxonomy" id="350054"/>
    <lineage>
        <taxon>Bacteria</taxon>
        <taxon>Bacillati</taxon>
        <taxon>Actinomycetota</taxon>
        <taxon>Actinomycetes</taxon>
        <taxon>Mycobacteriales</taxon>
        <taxon>Mycobacteriaceae</taxon>
        <taxon>Mycolicibacterium</taxon>
    </lineage>
</organism>
<dbReference type="EMBL" id="CP000656">
    <property type="protein sequence ID" value="ABP46133.1"/>
    <property type="molecule type" value="Genomic_DNA"/>
</dbReference>
<dbReference type="SMR" id="A4T9I4"/>
<dbReference type="STRING" id="350054.Mflv_3659"/>
<dbReference type="KEGG" id="mgi:Mflv_3659"/>
<dbReference type="eggNOG" id="COG2304">
    <property type="taxonomic scope" value="Bacteria"/>
</dbReference>
<dbReference type="HOGENOM" id="CLU_024570_2_0_11"/>
<dbReference type="OrthoDB" id="8882959at2"/>
<dbReference type="GO" id="GO:0005886">
    <property type="term" value="C:plasma membrane"/>
    <property type="evidence" value="ECO:0007669"/>
    <property type="project" value="UniProtKB-SubCell"/>
</dbReference>
<dbReference type="Gene3D" id="3.40.50.410">
    <property type="entry name" value="von Willebrand factor, type A domain"/>
    <property type="match status" value="1"/>
</dbReference>
<dbReference type="HAMAP" id="MF_01340">
    <property type="entry name" value="UPF0353"/>
    <property type="match status" value="1"/>
</dbReference>
<dbReference type="InterPro" id="IPR024163">
    <property type="entry name" value="Aerotolerance_reg_N"/>
</dbReference>
<dbReference type="InterPro" id="IPR022933">
    <property type="entry name" value="UPF0353"/>
</dbReference>
<dbReference type="InterPro" id="IPR050768">
    <property type="entry name" value="UPF0353/GerABKA_families"/>
</dbReference>
<dbReference type="InterPro" id="IPR002035">
    <property type="entry name" value="VWF_A"/>
</dbReference>
<dbReference type="InterPro" id="IPR036465">
    <property type="entry name" value="vWFA_dom_sf"/>
</dbReference>
<dbReference type="NCBIfam" id="NF010238">
    <property type="entry name" value="PRK13685.1"/>
    <property type="match status" value="1"/>
</dbReference>
<dbReference type="PANTHER" id="PTHR22550:SF5">
    <property type="entry name" value="LEUCINE ZIPPER PROTEIN 4"/>
    <property type="match status" value="1"/>
</dbReference>
<dbReference type="PANTHER" id="PTHR22550">
    <property type="entry name" value="SPORE GERMINATION PROTEIN"/>
    <property type="match status" value="1"/>
</dbReference>
<dbReference type="Pfam" id="PF07584">
    <property type="entry name" value="BatA"/>
    <property type="match status" value="1"/>
</dbReference>
<dbReference type="Pfam" id="PF13519">
    <property type="entry name" value="VWA_2"/>
    <property type="match status" value="1"/>
</dbReference>
<dbReference type="SMART" id="SM00327">
    <property type="entry name" value="VWA"/>
    <property type="match status" value="1"/>
</dbReference>
<dbReference type="SUPFAM" id="SSF53300">
    <property type="entry name" value="vWA-like"/>
    <property type="match status" value="1"/>
</dbReference>
<dbReference type="PROSITE" id="PS50234">
    <property type="entry name" value="VWFA"/>
    <property type="match status" value="1"/>
</dbReference>
<reference key="1">
    <citation type="submission" date="2007-04" db="EMBL/GenBank/DDBJ databases">
        <title>Complete sequence of chromosome of Mycobacterium gilvum PYR-GCK.</title>
        <authorList>
            <consortium name="US DOE Joint Genome Institute"/>
            <person name="Copeland A."/>
            <person name="Lucas S."/>
            <person name="Lapidus A."/>
            <person name="Barry K."/>
            <person name="Detter J.C."/>
            <person name="Glavina del Rio T."/>
            <person name="Hammon N."/>
            <person name="Israni S."/>
            <person name="Dalin E."/>
            <person name="Tice H."/>
            <person name="Pitluck S."/>
            <person name="Chain P."/>
            <person name="Malfatti S."/>
            <person name="Shin M."/>
            <person name="Vergez L."/>
            <person name="Schmutz J."/>
            <person name="Larimer F."/>
            <person name="Land M."/>
            <person name="Hauser L."/>
            <person name="Kyrpides N."/>
            <person name="Mikhailova N."/>
            <person name="Miller C."/>
            <person name="Richardson P."/>
        </authorList>
    </citation>
    <scope>NUCLEOTIDE SEQUENCE [LARGE SCALE GENOMIC DNA]</scope>
    <source>
        <strain>PYR-GCK</strain>
    </source>
</reference>
<proteinExistence type="inferred from homology"/>
<evidence type="ECO:0000255" key="1">
    <source>
        <dbReference type="HAMAP-Rule" id="MF_01340"/>
    </source>
</evidence>
<protein>
    <recommendedName>
        <fullName evidence="1">UPF0353 protein Mflv_3659</fullName>
    </recommendedName>
</protein>
<gene>
    <name type="ordered locus">Mflv_3659</name>
</gene>
<name>Y3659_MYCGI</name>